<protein>
    <recommendedName>
        <fullName>Serine/threonine-protein kinase mos</fullName>
        <ecNumber>2.7.11.1</ecNumber>
    </recommendedName>
    <alternativeName>
        <fullName>Oocyte maturation factor mos</fullName>
    </alternativeName>
</protein>
<keyword id="KW-0067">ATP-binding</keyword>
<keyword id="KW-0418">Kinase</keyword>
<keyword id="KW-0547">Nucleotide-binding</keyword>
<keyword id="KW-0723">Serine/threonine-protein kinase</keyword>
<keyword id="KW-0808">Transferase</keyword>
<name>MOS_GYMCA</name>
<feature type="chain" id="PRO_0000086354" description="Serine/threonine-protein kinase mos">
    <location>
        <begin position="1" status="less than"/>
        <end position="200" status="greater than"/>
    </location>
</feature>
<feature type="domain" description="Protein kinase" evidence="1">
    <location>
        <begin position="2"/>
        <end position="200" status="greater than"/>
    </location>
</feature>
<feature type="active site" description="Proton acceptor" evidence="1 2">
    <location>
        <position position="143"/>
    </location>
</feature>
<feature type="binding site" evidence="1">
    <location>
        <begin position="8"/>
        <end position="16"/>
    </location>
    <ligand>
        <name>ATP</name>
        <dbReference type="ChEBI" id="CHEBI:30616"/>
    </ligand>
</feature>
<feature type="binding site" evidence="1">
    <location>
        <position position="29"/>
    </location>
    <ligand>
        <name>ATP</name>
        <dbReference type="ChEBI" id="CHEBI:30616"/>
    </ligand>
</feature>
<feature type="non-terminal residue">
    <location>
        <position position="1"/>
    </location>
</feature>
<feature type="non-terminal residue">
    <location>
        <position position="200"/>
    </location>
</feature>
<organism>
    <name type="scientific">Gymnogyps californianus</name>
    <name type="common">California condor</name>
    <name type="synonym">Vultur californianus</name>
    <dbReference type="NCBI Taxonomy" id="33616"/>
    <lineage>
        <taxon>Eukaryota</taxon>
        <taxon>Metazoa</taxon>
        <taxon>Chordata</taxon>
        <taxon>Craniata</taxon>
        <taxon>Vertebrata</taxon>
        <taxon>Euteleostomi</taxon>
        <taxon>Archelosauria</taxon>
        <taxon>Archosauria</taxon>
        <taxon>Dinosauria</taxon>
        <taxon>Saurischia</taxon>
        <taxon>Theropoda</taxon>
        <taxon>Coelurosauria</taxon>
        <taxon>Aves</taxon>
        <taxon>Neognathae</taxon>
        <taxon>Neoaves</taxon>
        <taxon>Telluraves</taxon>
        <taxon>Accipitrimorphae</taxon>
        <taxon>Accipitriformes</taxon>
        <taxon>Cathartidae</taxon>
        <taxon>Gymnogyps</taxon>
    </lineage>
</organism>
<dbReference type="EC" id="2.7.11.1"/>
<dbReference type="EMBL" id="AF339330">
    <property type="protein sequence ID" value="AAL06306.1"/>
    <property type="molecule type" value="Genomic_DNA"/>
</dbReference>
<dbReference type="SMR" id="Q90XV6"/>
<dbReference type="GO" id="GO:0005524">
    <property type="term" value="F:ATP binding"/>
    <property type="evidence" value="ECO:0007669"/>
    <property type="project" value="UniProtKB-KW"/>
</dbReference>
<dbReference type="GO" id="GO:0106310">
    <property type="term" value="F:protein serine kinase activity"/>
    <property type="evidence" value="ECO:0007669"/>
    <property type="project" value="RHEA"/>
</dbReference>
<dbReference type="GO" id="GO:0004674">
    <property type="term" value="F:protein serine/threonine kinase activity"/>
    <property type="evidence" value="ECO:0007669"/>
    <property type="project" value="UniProtKB-KW"/>
</dbReference>
<dbReference type="FunFam" id="3.30.200.20:FF:000316">
    <property type="entry name" value="Proto-oncogene serine/threonine-protein kinase mos"/>
    <property type="match status" value="1"/>
</dbReference>
<dbReference type="Gene3D" id="3.30.200.20">
    <property type="entry name" value="Phosphorylase Kinase, domain 1"/>
    <property type="match status" value="1"/>
</dbReference>
<dbReference type="Gene3D" id="1.10.510.10">
    <property type="entry name" value="Transferase(Phosphotransferase) domain 1"/>
    <property type="match status" value="1"/>
</dbReference>
<dbReference type="InterPro" id="IPR011009">
    <property type="entry name" value="Kinase-like_dom_sf"/>
</dbReference>
<dbReference type="InterPro" id="IPR000719">
    <property type="entry name" value="Prot_kinase_dom"/>
</dbReference>
<dbReference type="InterPro" id="IPR017441">
    <property type="entry name" value="Protein_kinase_ATP_BS"/>
</dbReference>
<dbReference type="InterPro" id="IPR008271">
    <property type="entry name" value="Ser/Thr_kinase_AS"/>
</dbReference>
<dbReference type="InterPro" id="IPR051681">
    <property type="entry name" value="Ser/Thr_Kinases-Pseudokinases"/>
</dbReference>
<dbReference type="PANTHER" id="PTHR44329">
    <property type="entry name" value="SERINE/THREONINE-PROTEIN KINASE TNNI3K-RELATED"/>
    <property type="match status" value="1"/>
</dbReference>
<dbReference type="PANTHER" id="PTHR44329:SF285">
    <property type="entry name" value="V-MOS MOLONEY MURINE SARCOMA VIRAL ONCO HOMOLOG"/>
    <property type="match status" value="1"/>
</dbReference>
<dbReference type="Pfam" id="PF00069">
    <property type="entry name" value="Pkinase"/>
    <property type="match status" value="1"/>
</dbReference>
<dbReference type="SMART" id="SM00220">
    <property type="entry name" value="S_TKc"/>
    <property type="match status" value="1"/>
</dbReference>
<dbReference type="SUPFAM" id="SSF56112">
    <property type="entry name" value="Protein kinase-like (PK-like)"/>
    <property type="match status" value="1"/>
</dbReference>
<dbReference type="PROSITE" id="PS00107">
    <property type="entry name" value="PROTEIN_KINASE_ATP"/>
    <property type="match status" value="1"/>
</dbReference>
<dbReference type="PROSITE" id="PS50011">
    <property type="entry name" value="PROTEIN_KINASE_DOM"/>
    <property type="match status" value="1"/>
</dbReference>
<dbReference type="PROSITE" id="PS00108">
    <property type="entry name" value="PROTEIN_KINASE_ST"/>
    <property type="match status" value="1"/>
</dbReference>
<evidence type="ECO:0000255" key="1">
    <source>
        <dbReference type="PROSITE-ProRule" id="PRU00159"/>
    </source>
</evidence>
<evidence type="ECO:0000255" key="2">
    <source>
        <dbReference type="PROSITE-ProRule" id="PRU10027"/>
    </source>
</evidence>
<comment type="catalytic activity">
    <reaction>
        <text>L-seryl-[protein] + ATP = O-phospho-L-seryl-[protein] + ADP + H(+)</text>
        <dbReference type="Rhea" id="RHEA:17989"/>
        <dbReference type="Rhea" id="RHEA-COMP:9863"/>
        <dbReference type="Rhea" id="RHEA-COMP:11604"/>
        <dbReference type="ChEBI" id="CHEBI:15378"/>
        <dbReference type="ChEBI" id="CHEBI:29999"/>
        <dbReference type="ChEBI" id="CHEBI:30616"/>
        <dbReference type="ChEBI" id="CHEBI:83421"/>
        <dbReference type="ChEBI" id="CHEBI:456216"/>
        <dbReference type="EC" id="2.7.11.1"/>
    </reaction>
</comment>
<comment type="catalytic activity">
    <reaction>
        <text>L-threonyl-[protein] + ATP = O-phospho-L-threonyl-[protein] + ADP + H(+)</text>
        <dbReference type="Rhea" id="RHEA:46608"/>
        <dbReference type="Rhea" id="RHEA-COMP:11060"/>
        <dbReference type="Rhea" id="RHEA-COMP:11605"/>
        <dbReference type="ChEBI" id="CHEBI:15378"/>
        <dbReference type="ChEBI" id="CHEBI:30013"/>
        <dbReference type="ChEBI" id="CHEBI:30616"/>
        <dbReference type="ChEBI" id="CHEBI:61977"/>
        <dbReference type="ChEBI" id="CHEBI:456216"/>
        <dbReference type="EC" id="2.7.11.1"/>
    </reaction>
</comment>
<comment type="similarity">
    <text evidence="1">Belongs to the protein kinase superfamily. Ser/Thr protein kinase family.</text>
</comment>
<gene>
    <name type="primary">MOS</name>
</gene>
<accession>Q90XV6</accession>
<sequence>RLCLLQPLGSGGFGSVYKATYHGATVAVKQVKKSSKNRLASRQSFWAELNVARLQHNNVVRVVAASTCAPASQNSLGTIIMEYVGNITLHHVIYGTGDVWRQGEDDEGGCGRKALSMEETVCYSCDIMTGLAFLHSQGIVHLDLKPANIFITEQGVCKIGDFGCSQKLEEGLSQSPHVCQQGGTYTHRAPELLKGERVTA</sequence>
<proteinExistence type="inferred from homology"/>
<reference key="1">
    <citation type="journal article" date="2001" name="Proc. R. Soc. B">
        <title>Convergence and divergence in the evolution of aquatic birds.</title>
        <authorList>
            <person name="van Tuinen M."/>
            <person name="Butvill D.B."/>
            <person name="Kirsch J.A."/>
            <person name="Hedges S.B."/>
        </authorList>
    </citation>
    <scope>NUCLEOTIDE SEQUENCE [GENOMIC DNA]</scope>
</reference>